<organism>
    <name type="scientific">Oryza sativa subsp. japonica</name>
    <name type="common">Rice</name>
    <dbReference type="NCBI Taxonomy" id="39947"/>
    <lineage>
        <taxon>Eukaryota</taxon>
        <taxon>Viridiplantae</taxon>
        <taxon>Streptophyta</taxon>
        <taxon>Embryophyta</taxon>
        <taxon>Tracheophyta</taxon>
        <taxon>Spermatophyta</taxon>
        <taxon>Magnoliopsida</taxon>
        <taxon>Liliopsida</taxon>
        <taxon>Poales</taxon>
        <taxon>Poaceae</taxon>
        <taxon>BOP clade</taxon>
        <taxon>Oryzoideae</taxon>
        <taxon>Oryzeae</taxon>
        <taxon>Oryzinae</taxon>
        <taxon>Oryza</taxon>
        <taxon>Oryza sativa</taxon>
    </lineage>
</organism>
<comment type="function">
    <text evidence="1">Aux/IAA proteins are short-lived transcriptional factors that function as repressors of early auxin response genes at low auxin concentrations.</text>
</comment>
<comment type="subunit">
    <text evidence="1">Homodimers and heterodimers.</text>
</comment>
<comment type="subcellular location">
    <subcellularLocation>
        <location evidence="1">Nucleus</location>
    </subcellularLocation>
</comment>
<comment type="tissue specificity">
    <text evidence="4">Highly expressed in roots. Expressed in seedlings.</text>
</comment>
<comment type="induction">
    <text evidence="4">Not induced by auxin.</text>
</comment>
<comment type="similarity">
    <text evidence="5">Belongs to the Aux/IAA family.</text>
</comment>
<sequence>MSTSSGADSSPPVSGLDYDDTALTLALPGSSSSSSSTADPERKRAAHADHADAKPPSPKARAVGWPPVRAYRRNALREDSARAKLVKVAVDGAPYLRKVDLAAHAGYAPLLRALHGMFASCLAVRGGGGGDGEGTKLVDLVTGAEYVPTYEDKDGDWMLVGDVPWKMFVESCKRIRLMKSSEAVNLSPRRSSR</sequence>
<dbReference type="EMBL" id="AP004236">
    <property type="protein sequence ID" value="BAD33041.1"/>
    <property type="molecule type" value="Genomic_DNA"/>
</dbReference>
<dbReference type="EMBL" id="AP008212">
    <property type="protein sequence ID" value="BAF19900.1"/>
    <property type="molecule type" value="Genomic_DNA"/>
</dbReference>
<dbReference type="EMBL" id="AP014962">
    <property type="protein sequence ID" value="BAS98468.1"/>
    <property type="molecule type" value="Genomic_DNA"/>
</dbReference>
<dbReference type="EMBL" id="CM000143">
    <property type="protein sequence ID" value="EAZ37536.1"/>
    <property type="molecule type" value="Genomic_DNA"/>
</dbReference>
<dbReference type="EMBL" id="AK069376">
    <property type="status" value="NOT_ANNOTATED_CDS"/>
    <property type="molecule type" value="mRNA"/>
</dbReference>
<dbReference type="RefSeq" id="XP_015641726.1">
    <property type="nucleotide sequence ID" value="XM_015786240.1"/>
</dbReference>
<dbReference type="SMR" id="Q69VE0"/>
<dbReference type="STRING" id="39947.Q69VE0"/>
<dbReference type="PaxDb" id="39947-Q69VE0"/>
<dbReference type="EnsemblPlants" id="Os06t0597000-01">
    <property type="protein sequence ID" value="Os06t0597000-01"/>
    <property type="gene ID" value="Os06g0597000"/>
</dbReference>
<dbReference type="Gramene" id="Os06t0597000-01">
    <property type="protein sequence ID" value="Os06t0597000-01"/>
    <property type="gene ID" value="Os06g0597000"/>
</dbReference>
<dbReference type="KEGG" id="dosa:Os06g0597000"/>
<dbReference type="HOGENOM" id="CLU_049393_1_4_1"/>
<dbReference type="InParanoid" id="Q69VE0"/>
<dbReference type="OrthoDB" id="1287782at2759"/>
<dbReference type="Proteomes" id="UP000000763">
    <property type="component" value="Chromosome 6"/>
</dbReference>
<dbReference type="Proteomes" id="UP000007752">
    <property type="component" value="Chromosome 6"/>
</dbReference>
<dbReference type="Proteomes" id="UP000059680">
    <property type="component" value="Chromosome 6"/>
</dbReference>
<dbReference type="ExpressionAtlas" id="Q69VE0">
    <property type="expression patterns" value="baseline and differential"/>
</dbReference>
<dbReference type="GO" id="GO:0005634">
    <property type="term" value="C:nucleus"/>
    <property type="evidence" value="ECO:0007669"/>
    <property type="project" value="UniProtKB-SubCell"/>
</dbReference>
<dbReference type="GO" id="GO:0009734">
    <property type="term" value="P:auxin-activated signaling pathway"/>
    <property type="evidence" value="ECO:0007669"/>
    <property type="project" value="UniProtKB-KW"/>
</dbReference>
<dbReference type="GO" id="GO:0006355">
    <property type="term" value="P:regulation of DNA-templated transcription"/>
    <property type="evidence" value="ECO:0007669"/>
    <property type="project" value="InterPro"/>
</dbReference>
<dbReference type="FunFam" id="3.10.20.90:FF:000078">
    <property type="entry name" value="Auxin-responsive protein"/>
    <property type="match status" value="1"/>
</dbReference>
<dbReference type="Gene3D" id="3.10.20.90">
    <property type="entry name" value="Phosphatidylinositol 3-kinase Catalytic Subunit, Chain A, domain 1"/>
    <property type="match status" value="1"/>
</dbReference>
<dbReference type="InterPro" id="IPR033389">
    <property type="entry name" value="AUX/IAA_dom"/>
</dbReference>
<dbReference type="InterPro" id="IPR003311">
    <property type="entry name" value="AUX_IAA"/>
</dbReference>
<dbReference type="InterPro" id="IPR053793">
    <property type="entry name" value="PB1-like"/>
</dbReference>
<dbReference type="PANTHER" id="PTHR31734">
    <property type="entry name" value="AUXIN-RESPONSIVE PROTEIN IAA17"/>
    <property type="match status" value="1"/>
</dbReference>
<dbReference type="PANTHER" id="PTHR31734:SF92">
    <property type="entry name" value="AUXIN-RESPONSIVE PROTEIN IAA23"/>
    <property type="match status" value="1"/>
</dbReference>
<dbReference type="Pfam" id="PF02309">
    <property type="entry name" value="AUX_IAA"/>
    <property type="match status" value="1"/>
</dbReference>
<dbReference type="SUPFAM" id="SSF54277">
    <property type="entry name" value="CAD &amp; PB1 domains"/>
    <property type="match status" value="1"/>
</dbReference>
<dbReference type="PROSITE" id="PS51745">
    <property type="entry name" value="PB1"/>
    <property type="match status" value="1"/>
</dbReference>
<gene>
    <name type="primary">IAA23</name>
    <name type="ordered locus">Os06g0597000</name>
    <name type="ordered locus">LOC_Os06g39590</name>
    <name evidence="6" type="ORF">OsJ_21866</name>
    <name type="ORF">P0417D05.17-1</name>
</gene>
<protein>
    <recommendedName>
        <fullName>Auxin-responsive protein IAA23</fullName>
    </recommendedName>
    <alternativeName>
        <fullName>Indoleacetic acid-induced protein 23</fullName>
    </alternativeName>
</protein>
<proteinExistence type="evidence at transcript level"/>
<accession>Q69VE0</accession>
<accession>Q0DB73</accession>
<keyword id="KW-0927">Auxin signaling pathway</keyword>
<keyword id="KW-0539">Nucleus</keyword>
<keyword id="KW-1185">Reference proteome</keyword>
<keyword id="KW-0678">Repressor</keyword>
<keyword id="KW-0804">Transcription</keyword>
<keyword id="KW-0805">Transcription regulation</keyword>
<name>IAA23_ORYSJ</name>
<evidence type="ECO:0000250" key="1"/>
<evidence type="ECO:0000255" key="2">
    <source>
        <dbReference type="PROSITE-ProRule" id="PRU01081"/>
    </source>
</evidence>
<evidence type="ECO:0000256" key="3">
    <source>
        <dbReference type="SAM" id="MobiDB-lite"/>
    </source>
</evidence>
<evidence type="ECO:0000269" key="4">
    <source>
    </source>
</evidence>
<evidence type="ECO:0000305" key="5"/>
<evidence type="ECO:0000312" key="6">
    <source>
        <dbReference type="EMBL" id="EAZ37536.1"/>
    </source>
</evidence>
<feature type="chain" id="PRO_0000223222" description="Auxin-responsive protein IAA23">
    <location>
        <begin position="1"/>
        <end position="193"/>
    </location>
</feature>
<feature type="domain" description="PB1" evidence="2">
    <location>
        <begin position="83"/>
        <end position="191"/>
    </location>
</feature>
<feature type="region of interest" description="Disordered" evidence="3">
    <location>
        <begin position="1"/>
        <end position="66"/>
    </location>
</feature>
<feature type="short sequence motif" description="EAR-like (transcriptional repression)" evidence="1">
    <location>
        <begin position="23"/>
        <end position="27"/>
    </location>
</feature>
<feature type="compositionally biased region" description="Polar residues" evidence="3">
    <location>
        <begin position="1"/>
        <end position="12"/>
    </location>
</feature>
<feature type="compositionally biased region" description="Low complexity" evidence="3">
    <location>
        <begin position="21"/>
        <end position="36"/>
    </location>
</feature>
<feature type="compositionally biased region" description="Basic and acidic residues" evidence="3">
    <location>
        <begin position="39"/>
        <end position="53"/>
    </location>
</feature>
<feature type="sequence conflict" description="In Ref. 5; AK069376." evidence="5" ref="5">
    <original>P</original>
    <variation>T</variation>
    <location>
        <position position="67"/>
    </location>
</feature>
<reference key="1">
    <citation type="journal article" date="2005" name="Nature">
        <title>The map-based sequence of the rice genome.</title>
        <authorList>
            <consortium name="International rice genome sequencing project (IRGSP)"/>
        </authorList>
    </citation>
    <scope>NUCLEOTIDE SEQUENCE [LARGE SCALE GENOMIC DNA]</scope>
    <source>
        <strain>cv. Nipponbare</strain>
    </source>
</reference>
<reference key="2">
    <citation type="journal article" date="2008" name="Nucleic Acids Res.">
        <title>The rice annotation project database (RAP-DB): 2008 update.</title>
        <authorList>
            <consortium name="The rice annotation project (RAP)"/>
        </authorList>
    </citation>
    <scope>GENOME REANNOTATION</scope>
    <source>
        <strain>cv. Nipponbare</strain>
    </source>
</reference>
<reference key="3">
    <citation type="journal article" date="2013" name="Rice">
        <title>Improvement of the Oryza sativa Nipponbare reference genome using next generation sequence and optical map data.</title>
        <authorList>
            <person name="Kawahara Y."/>
            <person name="de la Bastide M."/>
            <person name="Hamilton J.P."/>
            <person name="Kanamori H."/>
            <person name="McCombie W.R."/>
            <person name="Ouyang S."/>
            <person name="Schwartz D.C."/>
            <person name="Tanaka T."/>
            <person name="Wu J."/>
            <person name="Zhou S."/>
            <person name="Childs K.L."/>
            <person name="Davidson R.M."/>
            <person name="Lin H."/>
            <person name="Quesada-Ocampo L."/>
            <person name="Vaillancourt B."/>
            <person name="Sakai H."/>
            <person name="Lee S.S."/>
            <person name="Kim J."/>
            <person name="Numa H."/>
            <person name="Itoh T."/>
            <person name="Buell C.R."/>
            <person name="Matsumoto T."/>
        </authorList>
    </citation>
    <scope>GENOME REANNOTATION</scope>
    <source>
        <strain>cv. Nipponbare</strain>
    </source>
</reference>
<reference key="4">
    <citation type="journal article" date="2005" name="PLoS Biol.">
        <title>The genomes of Oryza sativa: a history of duplications.</title>
        <authorList>
            <person name="Yu J."/>
            <person name="Wang J."/>
            <person name="Lin W."/>
            <person name="Li S."/>
            <person name="Li H."/>
            <person name="Zhou J."/>
            <person name="Ni P."/>
            <person name="Dong W."/>
            <person name="Hu S."/>
            <person name="Zeng C."/>
            <person name="Zhang J."/>
            <person name="Zhang Y."/>
            <person name="Li R."/>
            <person name="Xu Z."/>
            <person name="Li S."/>
            <person name="Li X."/>
            <person name="Zheng H."/>
            <person name="Cong L."/>
            <person name="Lin L."/>
            <person name="Yin J."/>
            <person name="Geng J."/>
            <person name="Li G."/>
            <person name="Shi J."/>
            <person name="Liu J."/>
            <person name="Lv H."/>
            <person name="Li J."/>
            <person name="Wang J."/>
            <person name="Deng Y."/>
            <person name="Ran L."/>
            <person name="Shi X."/>
            <person name="Wang X."/>
            <person name="Wu Q."/>
            <person name="Li C."/>
            <person name="Ren X."/>
            <person name="Wang J."/>
            <person name="Wang X."/>
            <person name="Li D."/>
            <person name="Liu D."/>
            <person name="Zhang X."/>
            <person name="Ji Z."/>
            <person name="Zhao W."/>
            <person name="Sun Y."/>
            <person name="Zhang Z."/>
            <person name="Bao J."/>
            <person name="Han Y."/>
            <person name="Dong L."/>
            <person name="Ji J."/>
            <person name="Chen P."/>
            <person name="Wu S."/>
            <person name="Liu J."/>
            <person name="Xiao Y."/>
            <person name="Bu D."/>
            <person name="Tan J."/>
            <person name="Yang L."/>
            <person name="Ye C."/>
            <person name="Zhang J."/>
            <person name="Xu J."/>
            <person name="Zhou Y."/>
            <person name="Yu Y."/>
            <person name="Zhang B."/>
            <person name="Zhuang S."/>
            <person name="Wei H."/>
            <person name="Liu B."/>
            <person name="Lei M."/>
            <person name="Yu H."/>
            <person name="Li Y."/>
            <person name="Xu H."/>
            <person name="Wei S."/>
            <person name="He X."/>
            <person name="Fang L."/>
            <person name="Zhang Z."/>
            <person name="Zhang Y."/>
            <person name="Huang X."/>
            <person name="Su Z."/>
            <person name="Tong W."/>
            <person name="Li J."/>
            <person name="Tong Z."/>
            <person name="Li S."/>
            <person name="Ye J."/>
            <person name="Wang L."/>
            <person name="Fang L."/>
            <person name="Lei T."/>
            <person name="Chen C.-S."/>
            <person name="Chen H.-C."/>
            <person name="Xu Z."/>
            <person name="Li H."/>
            <person name="Huang H."/>
            <person name="Zhang F."/>
            <person name="Xu H."/>
            <person name="Li N."/>
            <person name="Zhao C."/>
            <person name="Li S."/>
            <person name="Dong L."/>
            <person name="Huang Y."/>
            <person name="Li L."/>
            <person name="Xi Y."/>
            <person name="Qi Q."/>
            <person name="Li W."/>
            <person name="Zhang B."/>
            <person name="Hu W."/>
            <person name="Zhang Y."/>
            <person name="Tian X."/>
            <person name="Jiao Y."/>
            <person name="Liang X."/>
            <person name="Jin J."/>
            <person name="Gao L."/>
            <person name="Zheng W."/>
            <person name="Hao B."/>
            <person name="Liu S.-M."/>
            <person name="Wang W."/>
            <person name="Yuan L."/>
            <person name="Cao M."/>
            <person name="McDermott J."/>
            <person name="Samudrala R."/>
            <person name="Wang J."/>
            <person name="Wong G.K.-S."/>
            <person name="Yang H."/>
        </authorList>
    </citation>
    <scope>NUCLEOTIDE SEQUENCE [LARGE SCALE GENOMIC DNA]</scope>
    <source>
        <strain>cv. Nipponbare</strain>
    </source>
</reference>
<reference key="5">
    <citation type="journal article" date="2003" name="Science">
        <title>Collection, mapping, and annotation of over 28,000 cDNA clones from japonica rice.</title>
        <authorList>
            <consortium name="The rice full-length cDNA consortium"/>
        </authorList>
    </citation>
    <scope>NUCLEOTIDE SEQUENCE [LARGE SCALE MRNA]</scope>
    <source>
        <strain>cv. Nipponbare</strain>
    </source>
</reference>
<reference key="6">
    <citation type="journal article" date="2006" name="Funct. Integr. Genomics">
        <title>Structure and expression analysis of early auxin-responsive Aux/IAA gene family in rice (Oryza sativa).</title>
        <authorList>
            <person name="Jain M."/>
            <person name="Kaur N."/>
            <person name="Garg R."/>
            <person name="Thakur J.K."/>
            <person name="Tyagi A.K."/>
            <person name="Khurana J.P."/>
        </authorList>
    </citation>
    <scope>TISSUE SPECIFICITY</scope>
    <scope>INDUCTION</scope>
    <scope>NOMENCLATURE</scope>
</reference>